<gene>
    <name type="primary">pbx1</name>
    <name evidence="11" type="synonym">pbx1b</name>
</gene>
<accession>Q8QGC4</accession>
<name>PBX1_XENLA</name>
<reference evidence="9 11" key="1">
    <citation type="journal article" date="2002" name="Proc. Natl. Acad. Sci. U.S.A.">
        <title>Xpbx1b and Xmeis1b play a collaborative role in hindbrain and neural crest gene expression in Xenopus embryos.</title>
        <authorList>
            <person name="Maeda R."/>
            <person name="Ishimura A."/>
            <person name="Mood K."/>
            <person name="Park E.K."/>
            <person name="Buchberg A.M."/>
            <person name="Daar I.O."/>
        </authorList>
    </citation>
    <scope>NUCLEOTIDE SEQUENCE [MRNA]</scope>
    <scope>FUNCTION</scope>
    <scope>INTERACTION WITH MEIS1</scope>
    <scope>SUBCELLULAR LOCATION</scope>
    <scope>TISSUE SPECIFICITY</scope>
    <scope>DEVELOPMENTAL STAGE</scope>
    <source>
        <tissue evidence="6">Embryonic head</tissue>
    </source>
</reference>
<reference evidence="10" key="2">
    <citation type="submission" date="2005-10" db="EMBL/GenBank/DDBJ databases">
        <authorList>
            <consortium name="NIH - Xenopus Gene Collection (XGC) project"/>
        </authorList>
    </citation>
    <scope>NUCLEOTIDE SEQUENCE [LARGE SCALE MRNA]</scope>
    <source>
        <tissue evidence="10">Neurula</tissue>
    </source>
</reference>
<reference evidence="9" key="3">
    <citation type="journal article" date="2006" name="Biochem. Biophys. Res. Commun.">
        <title>Pbx1 and Meis1 regulate activity of the Xenopus laevis Zic3 promoter through a highly conserved region.</title>
        <authorList>
            <person name="Kelly L.E."/>
            <person name="Carrel T.L."/>
            <person name="Herman G.E."/>
            <person name="El-Hodiri H.M."/>
        </authorList>
    </citation>
    <scope>FUNCTION</scope>
</reference>
<keyword id="KW-0010">Activator</keyword>
<keyword id="KW-0217">Developmental protein</keyword>
<keyword id="KW-0221">Differentiation</keyword>
<keyword id="KW-0238">DNA-binding</keyword>
<keyword id="KW-0371">Homeobox</keyword>
<keyword id="KW-0524">Neurogenesis</keyword>
<keyword id="KW-0539">Nucleus</keyword>
<keyword id="KW-1185">Reference proteome</keyword>
<keyword id="KW-0804">Transcription</keyword>
<keyword id="KW-0805">Transcription regulation</keyword>
<protein>
    <recommendedName>
        <fullName evidence="1">Pre-B-cell leukemia transcription factor 1</fullName>
        <shortName evidence="8">Xpbx1</shortName>
    </recommendedName>
    <alternativeName>
        <fullName evidence="1">Homeobox protein pbx1</fullName>
    </alternativeName>
    <alternativeName>
        <fullName evidence="11">Pre-B-cell leukemia transcription factor 1b</fullName>
        <shortName evidence="8">Xpbx1b</shortName>
    </alternativeName>
</protein>
<comment type="function">
    <text evidence="6 7">Acts as a transcriptional activator in complex with isoform 2 of meis1, to induce posterior neural and neural crest gene expression, and thereby specify hindbrain and neural crest cell fate. Binds to a highly conserved region in the promoter of the neural crest gene zic3. Required for the nuclear transport or retention of isoform 2 of meis1.</text>
</comment>
<comment type="subunit">
    <text evidence="6">Forms a heterodimer with isoform 2 of meis1; the interaction is necessary for neural fate induction.</text>
</comment>
<comment type="subcellular location">
    <subcellularLocation>
        <location evidence="1">Nucleus</location>
    </subcellularLocation>
</comment>
<comment type="tissue specificity">
    <text evidence="6">Shows broad, weak expression from blastula through gastrula stages. At stage 14/15, expressed in a broad arc that gives rise to the forebrain and eyes. More intensely expressed in the lateral neural folds (presumptive neural crest) and as horizontal stripes in the posterior neural plate that give rise to the hindbrain. As development proceeds, expression progresses posteriorly along the neural folds and at stage 21, expression is pronounced in the prospective hindbrain and in migratory neural crest cells. At later stages (stage 26), expression becomes intense within the dorsal portion of the forebrain, and in the optic cup, caudal branchial arch, peripheral to the pronephric anlage, and in the dorsal anterior half of the spinal cord. Expression remains robust in the hindbrain but gradually becomes more restricted. At stage 28, expressed in the dorsal lateral portion of the neural tube and in the somatic layer of the lateral plate mesoderm that surrounds the pronephric anlage.</text>
</comment>
<comment type="developmental stage">
    <text evidence="6">Expressed both maternally and zygotically. Expressed at a low level in unfertilized eggs with increased expression during late gastrula through neurula and tailbud stages.</text>
</comment>
<comment type="miscellaneous">
    <text evidence="9">The displayed sequence corresponds to the ortholog of the mammalian isoform B sequences. There is currently no X.laevis ortholog sequence for isoform A.</text>
</comment>
<comment type="similarity">
    <text evidence="2">Belongs to the TALE/PBX homeobox family.</text>
</comment>
<organism>
    <name type="scientific">Xenopus laevis</name>
    <name type="common">African clawed frog</name>
    <dbReference type="NCBI Taxonomy" id="8355"/>
    <lineage>
        <taxon>Eukaryota</taxon>
        <taxon>Metazoa</taxon>
        <taxon>Chordata</taxon>
        <taxon>Craniata</taxon>
        <taxon>Vertebrata</taxon>
        <taxon>Euteleostomi</taxon>
        <taxon>Amphibia</taxon>
        <taxon>Batrachia</taxon>
        <taxon>Anura</taxon>
        <taxon>Pipoidea</taxon>
        <taxon>Pipidae</taxon>
        <taxon>Xenopodinae</taxon>
        <taxon>Xenopus</taxon>
        <taxon>Xenopus</taxon>
    </lineage>
</organism>
<proteinExistence type="evidence at protein level"/>
<feature type="chain" id="PRO_0000365098" description="Pre-B-cell leukemia transcription factor 1">
    <location>
        <begin position="1"/>
        <end position="347"/>
    </location>
</feature>
<feature type="domain" description="PBC" evidence="4">
    <location>
        <begin position="38"/>
        <end position="232"/>
    </location>
</feature>
<feature type="DNA-binding region" description="Homeobox; TALE-type" evidence="3">
    <location>
        <begin position="233"/>
        <end position="295"/>
    </location>
</feature>
<feature type="region of interest" description="Disordered" evidence="5">
    <location>
        <begin position="1"/>
        <end position="37"/>
    </location>
</feature>
<feature type="region of interest" description="PBC-A" evidence="4">
    <location>
        <begin position="45"/>
        <end position="124"/>
    </location>
</feature>
<feature type="region of interest" description="PBC-B" evidence="4">
    <location>
        <begin position="127"/>
        <end position="232"/>
    </location>
</feature>
<feature type="region of interest" description="Disordered" evidence="5">
    <location>
        <begin position="318"/>
        <end position="347"/>
    </location>
</feature>
<feature type="compositionally biased region" description="Polar residues" evidence="5">
    <location>
        <begin position="318"/>
        <end position="331"/>
    </location>
</feature>
<sequence length="347" mass="38562">MDDQPRLMHSHPGVGMAGHPSLSQHMQDGTGANEGDVGRKQDIGDILQQIMTITDQSLDEAQARKHALNCHRMKPALFNVLCEIKEKTVLSIRGAQEEEPSDPQLMRLDNMLLAEGVAGPEKGGGSAAAAAAAAASGGAGADNSTEHSDYRAKLSQIRQIYHTELEKYEQACNEFTTHVMNLLREQSRTRPISPKEIERMVSIIHRKFSSIQMQLKQSTCEAVMILRSRFLDARRKRRNFNKQATEILNEYFYSHLSNPYPSEEAKEELAKKCAITVSQVSNWFGNKRIRYKKNIGKFQEEANIYAAKTAVNATNVSVHGSQANSPSTPSSAGGYPSPCYQSDRRIQ</sequence>
<dbReference type="EMBL" id="AF480430">
    <property type="protein sequence ID" value="AAM18914.1"/>
    <property type="molecule type" value="mRNA"/>
</dbReference>
<dbReference type="EMBL" id="BC106422">
    <property type="protein sequence ID" value="AAI06423.1"/>
    <property type="molecule type" value="mRNA"/>
</dbReference>
<dbReference type="RefSeq" id="NP_001083906.1">
    <property type="nucleotide sequence ID" value="NM_001090437.1"/>
</dbReference>
<dbReference type="SMR" id="Q8QGC4"/>
<dbReference type="DNASU" id="399184"/>
<dbReference type="GeneID" id="399184"/>
<dbReference type="KEGG" id="xla:399184"/>
<dbReference type="AGR" id="Xenbase:XB-GENE-1217596"/>
<dbReference type="CTD" id="399184"/>
<dbReference type="Xenbase" id="XB-GENE-1217596">
    <property type="gene designation" value="pbx1.S"/>
</dbReference>
<dbReference type="OMA" id="CHRMRHA"/>
<dbReference type="OrthoDB" id="4187154at2759"/>
<dbReference type="Proteomes" id="UP000186698">
    <property type="component" value="Chromosome 4S"/>
</dbReference>
<dbReference type="Bgee" id="399184">
    <property type="expression patterns" value="Expressed in internal ear and 19 other cell types or tissues"/>
</dbReference>
<dbReference type="GO" id="GO:0030496">
    <property type="term" value="C:midbody"/>
    <property type="evidence" value="ECO:0000250"/>
    <property type="project" value="UniProtKB"/>
</dbReference>
<dbReference type="GO" id="GO:0005634">
    <property type="term" value="C:nucleus"/>
    <property type="evidence" value="ECO:0000314"/>
    <property type="project" value="UniProtKB"/>
</dbReference>
<dbReference type="GO" id="GO:0005667">
    <property type="term" value="C:transcription regulator complex"/>
    <property type="evidence" value="ECO:0000316"/>
    <property type="project" value="UniProtKB"/>
</dbReference>
<dbReference type="GO" id="GO:0000981">
    <property type="term" value="F:DNA-binding transcription factor activity, RNA polymerase II-specific"/>
    <property type="evidence" value="ECO:0007669"/>
    <property type="project" value="InterPro"/>
</dbReference>
<dbReference type="GO" id="GO:0043565">
    <property type="term" value="F:sequence-specific DNA binding"/>
    <property type="evidence" value="ECO:0000314"/>
    <property type="project" value="UniProtKB"/>
</dbReference>
<dbReference type="GO" id="GO:0009887">
    <property type="term" value="P:animal organ morphogenesis"/>
    <property type="evidence" value="ECO:0000318"/>
    <property type="project" value="GO_Central"/>
</dbReference>
<dbReference type="GO" id="GO:0007420">
    <property type="term" value="P:brain development"/>
    <property type="evidence" value="ECO:0000318"/>
    <property type="project" value="GO_Central"/>
</dbReference>
<dbReference type="GO" id="GO:1904888">
    <property type="term" value="P:cranial skeletal system development"/>
    <property type="evidence" value="ECO:0000250"/>
    <property type="project" value="UniProtKB"/>
</dbReference>
<dbReference type="GO" id="GO:0048568">
    <property type="term" value="P:embryonic organ development"/>
    <property type="evidence" value="ECO:0000318"/>
    <property type="project" value="GO_Central"/>
</dbReference>
<dbReference type="GO" id="GO:0001654">
    <property type="term" value="P:eye development"/>
    <property type="evidence" value="ECO:0000318"/>
    <property type="project" value="GO_Central"/>
</dbReference>
<dbReference type="GO" id="GO:0014036">
    <property type="term" value="P:neural crest cell fate specification"/>
    <property type="evidence" value="ECO:0000316"/>
    <property type="project" value="UniProtKB"/>
</dbReference>
<dbReference type="GO" id="GO:0048666">
    <property type="term" value="P:neuron development"/>
    <property type="evidence" value="ECO:0000318"/>
    <property type="project" value="GO_Central"/>
</dbReference>
<dbReference type="GO" id="GO:0045893">
    <property type="term" value="P:positive regulation of DNA-templated transcription"/>
    <property type="evidence" value="ECO:0000314"/>
    <property type="project" value="UniProtKB"/>
</dbReference>
<dbReference type="GO" id="GO:0045944">
    <property type="term" value="P:positive regulation of transcription by RNA polymerase II"/>
    <property type="evidence" value="ECO:0000314"/>
    <property type="project" value="UniProtKB"/>
</dbReference>
<dbReference type="CDD" id="cd00086">
    <property type="entry name" value="homeodomain"/>
    <property type="match status" value="1"/>
</dbReference>
<dbReference type="FunFam" id="1.10.10.60:FF:000277">
    <property type="entry name" value="Pre-B-cell leukemia transcription factor 1"/>
    <property type="match status" value="1"/>
</dbReference>
<dbReference type="Gene3D" id="1.10.10.60">
    <property type="entry name" value="Homeodomain-like"/>
    <property type="match status" value="1"/>
</dbReference>
<dbReference type="InterPro" id="IPR001356">
    <property type="entry name" value="HD"/>
</dbReference>
<dbReference type="InterPro" id="IPR017970">
    <property type="entry name" value="Homeobox_CS"/>
</dbReference>
<dbReference type="InterPro" id="IPR009057">
    <property type="entry name" value="Homeodomain-like_sf"/>
</dbReference>
<dbReference type="InterPro" id="IPR008422">
    <property type="entry name" value="KN_HD"/>
</dbReference>
<dbReference type="InterPro" id="IPR005542">
    <property type="entry name" value="PBX_PBC_dom"/>
</dbReference>
<dbReference type="InterPro" id="IPR050224">
    <property type="entry name" value="TALE_homeobox"/>
</dbReference>
<dbReference type="PANTHER" id="PTHR11850">
    <property type="entry name" value="HOMEOBOX PROTEIN TRANSCRIPTION FACTORS"/>
    <property type="match status" value="1"/>
</dbReference>
<dbReference type="Pfam" id="PF05920">
    <property type="entry name" value="Homeobox_KN"/>
    <property type="match status" value="1"/>
</dbReference>
<dbReference type="Pfam" id="PF03792">
    <property type="entry name" value="PBC"/>
    <property type="match status" value="1"/>
</dbReference>
<dbReference type="SMART" id="SM00389">
    <property type="entry name" value="HOX"/>
    <property type="match status" value="1"/>
</dbReference>
<dbReference type="SUPFAM" id="SSF46689">
    <property type="entry name" value="Homeodomain-like"/>
    <property type="match status" value="1"/>
</dbReference>
<dbReference type="PROSITE" id="PS00027">
    <property type="entry name" value="HOMEOBOX_1"/>
    <property type="match status" value="1"/>
</dbReference>
<dbReference type="PROSITE" id="PS50071">
    <property type="entry name" value="HOMEOBOX_2"/>
    <property type="match status" value="1"/>
</dbReference>
<dbReference type="PROSITE" id="PS51978">
    <property type="entry name" value="PBC"/>
    <property type="match status" value="1"/>
</dbReference>
<evidence type="ECO:0000250" key="1">
    <source>
        <dbReference type="UniProtKB" id="P40424"/>
    </source>
</evidence>
<evidence type="ECO:0000255" key="2"/>
<evidence type="ECO:0000255" key="3">
    <source>
        <dbReference type="PROSITE-ProRule" id="PRU00108"/>
    </source>
</evidence>
<evidence type="ECO:0000255" key="4">
    <source>
        <dbReference type="PROSITE-ProRule" id="PRU01322"/>
    </source>
</evidence>
<evidence type="ECO:0000256" key="5">
    <source>
        <dbReference type="SAM" id="MobiDB-lite"/>
    </source>
</evidence>
<evidence type="ECO:0000269" key="6">
    <source>
    </source>
</evidence>
<evidence type="ECO:0000269" key="7">
    <source>
    </source>
</evidence>
<evidence type="ECO:0000303" key="8">
    <source>
    </source>
</evidence>
<evidence type="ECO:0000305" key="9"/>
<evidence type="ECO:0000312" key="10">
    <source>
        <dbReference type="EMBL" id="AAI06423.1"/>
    </source>
</evidence>
<evidence type="ECO:0000312" key="11">
    <source>
        <dbReference type="EMBL" id="AAM18914.1"/>
    </source>
</evidence>